<protein>
    <recommendedName>
        <fullName evidence="1">Transcriptional repressor NrdR</fullName>
    </recommendedName>
</protein>
<name>NRDR_CROS8</name>
<comment type="function">
    <text evidence="1">Negatively regulates transcription of bacterial ribonucleotide reductase nrd genes and operons by binding to NrdR-boxes.</text>
</comment>
<comment type="cofactor">
    <cofactor evidence="1">
        <name>Zn(2+)</name>
        <dbReference type="ChEBI" id="CHEBI:29105"/>
    </cofactor>
    <text evidence="1">Binds 1 zinc ion.</text>
</comment>
<comment type="similarity">
    <text evidence="1">Belongs to the NrdR family.</text>
</comment>
<gene>
    <name evidence="1" type="primary">nrdR</name>
    <name type="ordered locus">ESA_02889</name>
</gene>
<evidence type="ECO:0000255" key="1">
    <source>
        <dbReference type="HAMAP-Rule" id="MF_00440"/>
    </source>
</evidence>
<proteinExistence type="inferred from homology"/>
<keyword id="KW-0067">ATP-binding</keyword>
<keyword id="KW-0238">DNA-binding</keyword>
<keyword id="KW-0479">Metal-binding</keyword>
<keyword id="KW-0547">Nucleotide-binding</keyword>
<keyword id="KW-1185">Reference proteome</keyword>
<keyword id="KW-0678">Repressor</keyword>
<keyword id="KW-0804">Transcription</keyword>
<keyword id="KW-0805">Transcription regulation</keyword>
<keyword id="KW-0862">Zinc</keyword>
<keyword id="KW-0863">Zinc-finger</keyword>
<feature type="chain" id="PRO_1000080750" description="Transcriptional repressor NrdR">
    <location>
        <begin position="1"/>
        <end position="149"/>
    </location>
</feature>
<feature type="domain" description="ATP-cone" evidence="1">
    <location>
        <begin position="49"/>
        <end position="139"/>
    </location>
</feature>
<feature type="zinc finger region" evidence="1">
    <location>
        <begin position="3"/>
        <end position="34"/>
    </location>
</feature>
<organism>
    <name type="scientific">Cronobacter sakazakii (strain ATCC BAA-894)</name>
    <name type="common">Enterobacter sakazakii</name>
    <dbReference type="NCBI Taxonomy" id="290339"/>
    <lineage>
        <taxon>Bacteria</taxon>
        <taxon>Pseudomonadati</taxon>
        <taxon>Pseudomonadota</taxon>
        <taxon>Gammaproteobacteria</taxon>
        <taxon>Enterobacterales</taxon>
        <taxon>Enterobacteriaceae</taxon>
        <taxon>Cronobacter</taxon>
    </lineage>
</organism>
<accession>A7MLX1</accession>
<reference key="1">
    <citation type="journal article" date="2010" name="PLoS ONE">
        <title>Genome sequence of Cronobacter sakazakii BAA-894 and comparative genomic hybridization analysis with other Cronobacter species.</title>
        <authorList>
            <person name="Kucerova E."/>
            <person name="Clifton S.W."/>
            <person name="Xia X.Q."/>
            <person name="Long F."/>
            <person name="Porwollik S."/>
            <person name="Fulton L."/>
            <person name="Fronick C."/>
            <person name="Minx P."/>
            <person name="Kyung K."/>
            <person name="Warren W."/>
            <person name="Fulton R."/>
            <person name="Feng D."/>
            <person name="Wollam A."/>
            <person name="Shah N."/>
            <person name="Bhonagiri V."/>
            <person name="Nash W.E."/>
            <person name="Hallsworth-Pepin K."/>
            <person name="Wilson R.K."/>
            <person name="McClelland M."/>
            <person name="Forsythe S.J."/>
        </authorList>
    </citation>
    <scope>NUCLEOTIDE SEQUENCE [LARGE SCALE GENOMIC DNA]</scope>
    <source>
        <strain>ATCC BAA-894</strain>
    </source>
</reference>
<sequence length="149" mass="17220">MHCPFCFAVDTKVIDSRLVGEGSSVRRRRQCLVCNERFTTFEVAELVMPRVVKSNDVREPFNEDKLRSGMQKALEKRPVSSDDVEMAINHIKSHLRATGEREVPSKLIGNLVMEQLKKLDKVAYIRFASVYRSFEDIREFGEEIARLQD</sequence>
<dbReference type="EMBL" id="CP000783">
    <property type="protein sequence ID" value="ABU78118.1"/>
    <property type="molecule type" value="Genomic_DNA"/>
</dbReference>
<dbReference type="RefSeq" id="WP_004387756.1">
    <property type="nucleotide sequence ID" value="NC_009778.1"/>
</dbReference>
<dbReference type="SMR" id="A7MLX1"/>
<dbReference type="GeneID" id="56731675"/>
<dbReference type="KEGG" id="esa:ESA_02889"/>
<dbReference type="HOGENOM" id="CLU_108412_0_0_6"/>
<dbReference type="Proteomes" id="UP000000260">
    <property type="component" value="Chromosome"/>
</dbReference>
<dbReference type="GO" id="GO:0005524">
    <property type="term" value="F:ATP binding"/>
    <property type="evidence" value="ECO:0007669"/>
    <property type="project" value="UniProtKB-KW"/>
</dbReference>
<dbReference type="GO" id="GO:0003677">
    <property type="term" value="F:DNA binding"/>
    <property type="evidence" value="ECO:0007669"/>
    <property type="project" value="UniProtKB-KW"/>
</dbReference>
<dbReference type="GO" id="GO:0008270">
    <property type="term" value="F:zinc ion binding"/>
    <property type="evidence" value="ECO:0007669"/>
    <property type="project" value="UniProtKB-UniRule"/>
</dbReference>
<dbReference type="GO" id="GO:0045892">
    <property type="term" value="P:negative regulation of DNA-templated transcription"/>
    <property type="evidence" value="ECO:0007669"/>
    <property type="project" value="UniProtKB-UniRule"/>
</dbReference>
<dbReference type="HAMAP" id="MF_00440">
    <property type="entry name" value="NrdR"/>
    <property type="match status" value="1"/>
</dbReference>
<dbReference type="InterPro" id="IPR005144">
    <property type="entry name" value="ATP-cone_dom"/>
</dbReference>
<dbReference type="InterPro" id="IPR055173">
    <property type="entry name" value="NrdR-like_N"/>
</dbReference>
<dbReference type="InterPro" id="IPR003796">
    <property type="entry name" value="RNR_NrdR-like"/>
</dbReference>
<dbReference type="NCBIfam" id="TIGR00244">
    <property type="entry name" value="transcriptional regulator NrdR"/>
    <property type="match status" value="1"/>
</dbReference>
<dbReference type="PANTHER" id="PTHR30455">
    <property type="entry name" value="TRANSCRIPTIONAL REPRESSOR NRDR"/>
    <property type="match status" value="1"/>
</dbReference>
<dbReference type="PANTHER" id="PTHR30455:SF2">
    <property type="entry name" value="TRANSCRIPTIONAL REPRESSOR NRDR"/>
    <property type="match status" value="1"/>
</dbReference>
<dbReference type="Pfam" id="PF03477">
    <property type="entry name" value="ATP-cone"/>
    <property type="match status" value="1"/>
</dbReference>
<dbReference type="Pfam" id="PF22811">
    <property type="entry name" value="Zn_ribbon_NrdR"/>
    <property type="match status" value="1"/>
</dbReference>
<dbReference type="PROSITE" id="PS51161">
    <property type="entry name" value="ATP_CONE"/>
    <property type="match status" value="1"/>
</dbReference>